<sequence length="577" mass="61860">MSAATQSPMMQMASGNGASDRDPLPPGWEIKIDPQTGWPFFVDHNSRTTTWNDPRVPPEGPKDTASSANGPSRDGSRLLPIREGHPIYPQLRPGYIPIPVLHEGSENRQPHLFHAYSQPGVQRFRTEAAAATPQRSQSPLRGGMTEAAQTDKQCGQMPATATTAAAQPPTAHGPERSQSPAASDCSSSSSSASLPSSGRSSLGSHQLPRGYIPIPVIHEQNITRPAAQPSFHQAQKTHYPAQQGEYQPQQPVYHKIQGDDWEPRPLRAASPFRSPVRGASSREGSPARSGTPVHCPSPIRVHTVVDRPQPMTHREPPPVTQPENKPESKPGPAGPDLPPGHIPIQVIRREADSKPVSQKSPPPAEKVEVKVSSAPIPCPSPSPAPSAVPSPPKNVAAEQKAAPSPAPAEPAAPKSGEAETPPKHPGVLKVEAILEKVQGLEQAVDSFEGKKTDKKYLMIEEYLTKELLALDSVDPEGRADVRQARRDGVRKVQTILEKLEQKAIDVPGQVQVYELQPSNLEAEQPLQEIMGAVVADKDKKGPENKDPQTESQQLEAKAATPPNPSNPADSAGNLVAP</sequence>
<accession>Q9JLV1</accession>
<accession>Q9CQL3</accession>
<accession>Q9JJC7</accession>
<protein>
    <recommendedName>
        <fullName>BAG family molecular chaperone regulator 3</fullName>
        <shortName>BAG-3</shortName>
    </recommendedName>
    <alternativeName>
        <fullName>Bcl-2-associated athanogene 3</fullName>
    </alternativeName>
    <alternativeName>
        <fullName>Bcl-2-binding protein Bis</fullName>
    </alternativeName>
</protein>
<keyword id="KW-0002">3D-structure</keyword>
<keyword id="KW-0007">Acetylation</keyword>
<keyword id="KW-0053">Apoptosis</keyword>
<keyword id="KW-0143">Chaperone</keyword>
<keyword id="KW-0963">Cytoplasm</keyword>
<keyword id="KW-1017">Isopeptide bond</keyword>
<keyword id="KW-0488">Methylation</keyword>
<keyword id="KW-0539">Nucleus</keyword>
<keyword id="KW-0597">Phosphoprotein</keyword>
<keyword id="KW-1185">Reference proteome</keyword>
<keyword id="KW-0677">Repeat</keyword>
<keyword id="KW-0832">Ubl conjugation</keyword>
<reference key="1">
    <citation type="journal article" date="1999" name="Oncogene">
        <title>Bis, a Bcl-2-binding protein that synergizes with Bcl-2 in preventing cell death.</title>
        <authorList>
            <person name="Lee J.H."/>
            <person name="Takahashi T."/>
            <person name="Yasuhara N."/>
            <person name="Inazawa J."/>
            <person name="Kamada S."/>
            <person name="Tsujimoto Y."/>
        </authorList>
    </citation>
    <scope>NUCLEOTIDE SEQUENCE [MRNA]</scope>
</reference>
<reference key="2">
    <citation type="submission" date="2000-04" db="EMBL/GenBank/DDBJ databases">
        <title>Isolation of full-length cDNA clones from mouse brain cDNA library made by oligo-capping method.</title>
        <authorList>
            <person name="Osada N."/>
            <person name="Kusuda J."/>
            <person name="Tanuma R."/>
            <person name="Ito A."/>
            <person name="Hirata M."/>
            <person name="Sugano S."/>
            <person name="Hashimoto K."/>
        </authorList>
    </citation>
    <scope>NUCLEOTIDE SEQUENCE [LARGE SCALE MRNA]</scope>
    <source>
        <strain>C57BL/6J</strain>
        <tissue>Brain</tissue>
    </source>
</reference>
<reference key="3">
    <citation type="journal article" date="2005" name="Science">
        <title>The transcriptional landscape of the mammalian genome.</title>
        <authorList>
            <person name="Carninci P."/>
            <person name="Kasukawa T."/>
            <person name="Katayama S."/>
            <person name="Gough J."/>
            <person name="Frith M.C."/>
            <person name="Maeda N."/>
            <person name="Oyama R."/>
            <person name="Ravasi T."/>
            <person name="Lenhard B."/>
            <person name="Wells C."/>
            <person name="Kodzius R."/>
            <person name="Shimokawa K."/>
            <person name="Bajic V.B."/>
            <person name="Brenner S.E."/>
            <person name="Batalov S."/>
            <person name="Forrest A.R."/>
            <person name="Zavolan M."/>
            <person name="Davis M.J."/>
            <person name="Wilming L.G."/>
            <person name="Aidinis V."/>
            <person name="Allen J.E."/>
            <person name="Ambesi-Impiombato A."/>
            <person name="Apweiler R."/>
            <person name="Aturaliya R.N."/>
            <person name="Bailey T.L."/>
            <person name="Bansal M."/>
            <person name="Baxter L."/>
            <person name="Beisel K.W."/>
            <person name="Bersano T."/>
            <person name="Bono H."/>
            <person name="Chalk A.M."/>
            <person name="Chiu K.P."/>
            <person name="Choudhary V."/>
            <person name="Christoffels A."/>
            <person name="Clutterbuck D.R."/>
            <person name="Crowe M.L."/>
            <person name="Dalla E."/>
            <person name="Dalrymple B.P."/>
            <person name="de Bono B."/>
            <person name="Della Gatta G."/>
            <person name="di Bernardo D."/>
            <person name="Down T."/>
            <person name="Engstrom P."/>
            <person name="Fagiolini M."/>
            <person name="Faulkner G."/>
            <person name="Fletcher C.F."/>
            <person name="Fukushima T."/>
            <person name="Furuno M."/>
            <person name="Futaki S."/>
            <person name="Gariboldi M."/>
            <person name="Georgii-Hemming P."/>
            <person name="Gingeras T.R."/>
            <person name="Gojobori T."/>
            <person name="Green R.E."/>
            <person name="Gustincich S."/>
            <person name="Harbers M."/>
            <person name="Hayashi Y."/>
            <person name="Hensch T.K."/>
            <person name="Hirokawa N."/>
            <person name="Hill D."/>
            <person name="Huminiecki L."/>
            <person name="Iacono M."/>
            <person name="Ikeo K."/>
            <person name="Iwama A."/>
            <person name="Ishikawa T."/>
            <person name="Jakt M."/>
            <person name="Kanapin A."/>
            <person name="Katoh M."/>
            <person name="Kawasawa Y."/>
            <person name="Kelso J."/>
            <person name="Kitamura H."/>
            <person name="Kitano H."/>
            <person name="Kollias G."/>
            <person name="Krishnan S.P."/>
            <person name="Kruger A."/>
            <person name="Kummerfeld S.K."/>
            <person name="Kurochkin I.V."/>
            <person name="Lareau L.F."/>
            <person name="Lazarevic D."/>
            <person name="Lipovich L."/>
            <person name="Liu J."/>
            <person name="Liuni S."/>
            <person name="McWilliam S."/>
            <person name="Madan Babu M."/>
            <person name="Madera M."/>
            <person name="Marchionni L."/>
            <person name="Matsuda H."/>
            <person name="Matsuzawa S."/>
            <person name="Miki H."/>
            <person name="Mignone F."/>
            <person name="Miyake S."/>
            <person name="Morris K."/>
            <person name="Mottagui-Tabar S."/>
            <person name="Mulder N."/>
            <person name="Nakano N."/>
            <person name="Nakauchi H."/>
            <person name="Ng P."/>
            <person name="Nilsson R."/>
            <person name="Nishiguchi S."/>
            <person name="Nishikawa S."/>
            <person name="Nori F."/>
            <person name="Ohara O."/>
            <person name="Okazaki Y."/>
            <person name="Orlando V."/>
            <person name="Pang K.C."/>
            <person name="Pavan W.J."/>
            <person name="Pavesi G."/>
            <person name="Pesole G."/>
            <person name="Petrovsky N."/>
            <person name="Piazza S."/>
            <person name="Reed J."/>
            <person name="Reid J.F."/>
            <person name="Ring B.Z."/>
            <person name="Ringwald M."/>
            <person name="Rost B."/>
            <person name="Ruan Y."/>
            <person name="Salzberg S.L."/>
            <person name="Sandelin A."/>
            <person name="Schneider C."/>
            <person name="Schoenbach C."/>
            <person name="Sekiguchi K."/>
            <person name="Semple C.A."/>
            <person name="Seno S."/>
            <person name="Sessa L."/>
            <person name="Sheng Y."/>
            <person name="Shibata Y."/>
            <person name="Shimada H."/>
            <person name="Shimada K."/>
            <person name="Silva D."/>
            <person name="Sinclair B."/>
            <person name="Sperling S."/>
            <person name="Stupka E."/>
            <person name="Sugiura K."/>
            <person name="Sultana R."/>
            <person name="Takenaka Y."/>
            <person name="Taki K."/>
            <person name="Tammoja K."/>
            <person name="Tan S.L."/>
            <person name="Tang S."/>
            <person name="Taylor M.S."/>
            <person name="Tegner J."/>
            <person name="Teichmann S.A."/>
            <person name="Ueda H.R."/>
            <person name="van Nimwegen E."/>
            <person name="Verardo R."/>
            <person name="Wei C.L."/>
            <person name="Yagi K."/>
            <person name="Yamanishi H."/>
            <person name="Zabarovsky E."/>
            <person name="Zhu S."/>
            <person name="Zimmer A."/>
            <person name="Hide W."/>
            <person name="Bult C."/>
            <person name="Grimmond S.M."/>
            <person name="Teasdale R.D."/>
            <person name="Liu E.T."/>
            <person name="Brusic V."/>
            <person name="Quackenbush J."/>
            <person name="Wahlestedt C."/>
            <person name="Mattick J.S."/>
            <person name="Hume D.A."/>
            <person name="Kai C."/>
            <person name="Sasaki D."/>
            <person name="Tomaru Y."/>
            <person name="Fukuda S."/>
            <person name="Kanamori-Katayama M."/>
            <person name="Suzuki M."/>
            <person name="Aoki J."/>
            <person name="Arakawa T."/>
            <person name="Iida J."/>
            <person name="Imamura K."/>
            <person name="Itoh M."/>
            <person name="Kato T."/>
            <person name="Kawaji H."/>
            <person name="Kawagashira N."/>
            <person name="Kawashima T."/>
            <person name="Kojima M."/>
            <person name="Kondo S."/>
            <person name="Konno H."/>
            <person name="Nakano K."/>
            <person name="Ninomiya N."/>
            <person name="Nishio T."/>
            <person name="Okada M."/>
            <person name="Plessy C."/>
            <person name="Shibata K."/>
            <person name="Shiraki T."/>
            <person name="Suzuki S."/>
            <person name="Tagami M."/>
            <person name="Waki K."/>
            <person name="Watahiki A."/>
            <person name="Okamura-Oho Y."/>
            <person name="Suzuki H."/>
            <person name="Kawai J."/>
            <person name="Hayashizaki Y."/>
        </authorList>
    </citation>
    <scope>NUCLEOTIDE SEQUENCE [LARGE SCALE MRNA]</scope>
    <source>
        <strain>C57BL/6J</strain>
        <tissue>Bone</tissue>
        <tissue>Pancreas</tissue>
        <tissue>Testis</tissue>
    </source>
</reference>
<reference key="4">
    <citation type="submission" date="2005-07" db="EMBL/GenBank/DDBJ databases">
        <authorList>
            <person name="Mural R.J."/>
            <person name="Adams M.D."/>
            <person name="Myers E.W."/>
            <person name="Smith H.O."/>
            <person name="Venter J.C."/>
        </authorList>
    </citation>
    <scope>NUCLEOTIDE SEQUENCE [LARGE SCALE GENOMIC DNA]</scope>
</reference>
<reference key="5">
    <citation type="journal article" date="2007" name="Proc. Natl. Acad. Sci. U.S.A.">
        <title>Large-scale phosphorylation analysis of mouse liver.</title>
        <authorList>
            <person name="Villen J."/>
            <person name="Beausoleil S.A."/>
            <person name="Gerber S.A."/>
            <person name="Gygi S.P."/>
        </authorList>
    </citation>
    <scope>PHOSPHORYLATION [LARGE SCALE ANALYSIS] AT SER-297 AND SER-390</scope>
    <scope>IDENTIFICATION BY MASS SPECTROMETRY [LARGE SCALE ANALYSIS]</scope>
    <source>
        <tissue>Liver</tissue>
    </source>
</reference>
<reference key="6">
    <citation type="journal article" date="2010" name="Cell">
        <title>A tissue-specific atlas of mouse protein phosphorylation and expression.</title>
        <authorList>
            <person name="Huttlin E.L."/>
            <person name="Jedrychowski M.P."/>
            <person name="Elias J.E."/>
            <person name="Goswami T."/>
            <person name="Rad R."/>
            <person name="Beausoleil S.A."/>
            <person name="Villen J."/>
            <person name="Haas W."/>
            <person name="Sowa M.E."/>
            <person name="Gygi S.P."/>
        </authorList>
    </citation>
    <scope>PHOSPHORYLATION [LARGE SCALE ANALYSIS] AT SER-138; THR-291; SER-297; SER-380; SER-382 AND SER-390</scope>
    <scope>IDENTIFICATION BY MASS SPECTROMETRY [LARGE SCALE ANALYSIS]</scope>
    <source>
        <tissue>Brown adipose tissue</tissue>
        <tissue>Heart</tissue>
        <tissue>Liver</tissue>
        <tissue>Lung</tissue>
        <tissue>Pancreas</tissue>
        <tissue>Spleen</tissue>
        <tissue>Testis</tissue>
    </source>
</reference>
<reference key="7">
    <citation type="journal article" date="2010" name="Curr. Biol.">
        <title>Chaperone-assisted selective autophagy is essential for muscle maintenance.</title>
        <authorList>
            <person name="Arndt V."/>
            <person name="Dick N."/>
            <person name="Tawo R."/>
            <person name="Dreiseidler M."/>
            <person name="Wenzel D."/>
            <person name="Hesse M."/>
            <person name="Fuerst D.O."/>
            <person name="Saftig P."/>
            <person name="Saint R."/>
            <person name="Fleischmann B.K."/>
            <person name="Hoch M."/>
            <person name="Hoehfeld J."/>
        </authorList>
    </citation>
    <scope>INTERACTION WITH HSPA8; HSPB8 AND STUB1 IN CASA COMPLEX</scope>
</reference>
<reference key="8">
    <citation type="journal article" date="2014" name="Mol. Cell. Proteomics">
        <title>Immunoaffinity enrichment and mass spectrometry analysis of protein methylation.</title>
        <authorList>
            <person name="Guo A."/>
            <person name="Gu H."/>
            <person name="Zhou J."/>
            <person name="Mulhern D."/>
            <person name="Wang Y."/>
            <person name="Lee K.A."/>
            <person name="Yang V."/>
            <person name="Aguiar M."/>
            <person name="Kornhauser J."/>
            <person name="Jia X."/>
            <person name="Ren J."/>
            <person name="Beausoleil S.A."/>
            <person name="Silva J.C."/>
            <person name="Vemulapalli V."/>
            <person name="Bedford M.T."/>
            <person name="Comb M.J."/>
        </authorList>
    </citation>
    <scope>METHYLATION [LARGE SCALE ANALYSIS] AT ARG-141 AND ARG-267</scope>
    <scope>IDENTIFICATION BY MASS SPECTROMETRY [LARGE SCALE ANALYSIS]</scope>
    <source>
        <tissue>Brain</tissue>
    </source>
</reference>
<reference key="9">
    <citation type="submission" date="2004-02" db="PDB data bank">
        <title>Solution structure of the murine BAG domain of Bcl2-associated athanogene 3.</title>
        <authorList>
            <consortium name="RIKEN structural genomics initiative (RSGI)"/>
        </authorList>
    </citation>
    <scope>STRUCTURE BY NMR OF 404-503</scope>
</reference>
<name>BAG3_MOUSE</name>
<organism>
    <name type="scientific">Mus musculus</name>
    <name type="common">Mouse</name>
    <dbReference type="NCBI Taxonomy" id="10090"/>
    <lineage>
        <taxon>Eukaryota</taxon>
        <taxon>Metazoa</taxon>
        <taxon>Chordata</taxon>
        <taxon>Craniata</taxon>
        <taxon>Vertebrata</taxon>
        <taxon>Euteleostomi</taxon>
        <taxon>Mammalia</taxon>
        <taxon>Eutheria</taxon>
        <taxon>Euarchontoglires</taxon>
        <taxon>Glires</taxon>
        <taxon>Rodentia</taxon>
        <taxon>Myomorpha</taxon>
        <taxon>Muroidea</taxon>
        <taxon>Muridae</taxon>
        <taxon>Murinae</taxon>
        <taxon>Mus</taxon>
        <taxon>Mus</taxon>
    </lineage>
</organism>
<evidence type="ECO:0000250" key="1">
    <source>
        <dbReference type="UniProtKB" id="O95817"/>
    </source>
</evidence>
<evidence type="ECO:0000255" key="2">
    <source>
        <dbReference type="PROSITE-ProRule" id="PRU00224"/>
    </source>
</evidence>
<evidence type="ECO:0000255" key="3">
    <source>
        <dbReference type="PROSITE-ProRule" id="PRU00369"/>
    </source>
</evidence>
<evidence type="ECO:0000256" key="4">
    <source>
        <dbReference type="SAM" id="MobiDB-lite"/>
    </source>
</evidence>
<evidence type="ECO:0000269" key="5">
    <source>
    </source>
</evidence>
<evidence type="ECO:0000305" key="6"/>
<evidence type="ECO:0007744" key="7">
    <source>
    </source>
</evidence>
<evidence type="ECO:0007744" key="8">
    <source>
    </source>
</evidence>
<evidence type="ECO:0007744" key="9">
    <source>
    </source>
</evidence>
<evidence type="ECO:0007829" key="10">
    <source>
        <dbReference type="PDB" id="1UK5"/>
    </source>
</evidence>
<gene>
    <name type="primary">Bag3</name>
    <name type="synonym">Bis</name>
    <name type="ORF">MNCb-2243</name>
</gene>
<dbReference type="EMBL" id="AF130471">
    <property type="protein sequence ID" value="AAF26840.1"/>
    <property type="molecule type" value="mRNA"/>
</dbReference>
<dbReference type="EMBL" id="AB041583">
    <property type="protein sequence ID" value="BAA95066.1"/>
    <property type="molecule type" value="mRNA"/>
</dbReference>
<dbReference type="EMBL" id="AK007414">
    <property type="protein sequence ID" value="BAB25024.1"/>
    <property type="molecule type" value="mRNA"/>
</dbReference>
<dbReference type="EMBL" id="AK016510">
    <property type="protein sequence ID" value="BAB30278.1"/>
    <property type="molecule type" value="mRNA"/>
</dbReference>
<dbReference type="EMBL" id="AK036675">
    <property type="protein sequence ID" value="BAC29531.1"/>
    <property type="molecule type" value="mRNA"/>
</dbReference>
<dbReference type="EMBL" id="CH466531">
    <property type="protein sequence ID" value="EDL17651.1"/>
    <property type="molecule type" value="Genomic_DNA"/>
</dbReference>
<dbReference type="CCDS" id="CCDS21898.1"/>
<dbReference type="RefSeq" id="NP_038891.4">
    <property type="nucleotide sequence ID" value="NM_013863.5"/>
</dbReference>
<dbReference type="PDB" id="1UK5">
    <property type="method" value="NMR"/>
    <property type="chains" value="A=406-503"/>
</dbReference>
<dbReference type="PDBsum" id="1UK5"/>
<dbReference type="SMR" id="Q9JLV1"/>
<dbReference type="BioGRID" id="205891">
    <property type="interactions" value="72"/>
</dbReference>
<dbReference type="FunCoup" id="Q9JLV1">
    <property type="interactions" value="878"/>
</dbReference>
<dbReference type="IntAct" id="Q9JLV1">
    <property type="interactions" value="5"/>
</dbReference>
<dbReference type="MINT" id="Q9JLV1"/>
<dbReference type="STRING" id="10090.ENSMUSP00000033136"/>
<dbReference type="GlyGen" id="Q9JLV1">
    <property type="glycosylation" value="6 sites, 1 N-linked glycan (1 site), 1 O-linked glycan (5 sites)"/>
</dbReference>
<dbReference type="iPTMnet" id="Q9JLV1"/>
<dbReference type="PhosphoSitePlus" id="Q9JLV1"/>
<dbReference type="SwissPalm" id="Q9JLV1"/>
<dbReference type="jPOST" id="Q9JLV1"/>
<dbReference type="PaxDb" id="10090-ENSMUSP00000033136"/>
<dbReference type="ProteomicsDB" id="265200"/>
<dbReference type="Pumba" id="Q9JLV1"/>
<dbReference type="Antibodypedia" id="18850">
    <property type="antibodies" value="477 antibodies from 39 providers"/>
</dbReference>
<dbReference type="DNASU" id="29810"/>
<dbReference type="Ensembl" id="ENSMUST00000033136.9">
    <property type="protein sequence ID" value="ENSMUSP00000033136.8"/>
    <property type="gene ID" value="ENSMUSG00000030847.9"/>
</dbReference>
<dbReference type="GeneID" id="29810"/>
<dbReference type="KEGG" id="mmu:29810"/>
<dbReference type="UCSC" id="uc009jzb.2">
    <property type="organism name" value="mouse"/>
</dbReference>
<dbReference type="AGR" id="MGI:1352493"/>
<dbReference type="CTD" id="9531"/>
<dbReference type="MGI" id="MGI:1352493">
    <property type="gene designation" value="Bag3"/>
</dbReference>
<dbReference type="VEuPathDB" id="HostDB:ENSMUSG00000030847"/>
<dbReference type="eggNOG" id="KOG0940">
    <property type="taxonomic scope" value="Eukaryota"/>
</dbReference>
<dbReference type="eggNOG" id="KOG4361">
    <property type="taxonomic scope" value="Eukaryota"/>
</dbReference>
<dbReference type="GeneTree" id="ENSGT00940000159204"/>
<dbReference type="HOGENOM" id="CLU_034378_0_0_1"/>
<dbReference type="InParanoid" id="Q9JLV1"/>
<dbReference type="OMA" id="QKGEPSM"/>
<dbReference type="OrthoDB" id="333905at2759"/>
<dbReference type="TreeFam" id="TF102013"/>
<dbReference type="Reactome" id="R-MMU-3371453">
    <property type="pathway name" value="Regulation of HSF1-mediated heat shock response"/>
</dbReference>
<dbReference type="BioGRID-ORCS" id="29810">
    <property type="hits" value="2 hits in 79 CRISPR screens"/>
</dbReference>
<dbReference type="ChiTaRS" id="Bag3">
    <property type="organism name" value="mouse"/>
</dbReference>
<dbReference type="EvolutionaryTrace" id="Q9JLV1"/>
<dbReference type="PRO" id="PR:Q9JLV1"/>
<dbReference type="Proteomes" id="UP000000589">
    <property type="component" value="Chromosome 7"/>
</dbReference>
<dbReference type="RNAct" id="Q9JLV1">
    <property type="molecule type" value="protein"/>
</dbReference>
<dbReference type="Bgee" id="ENSMUSG00000030847">
    <property type="expression patterns" value="Expressed in cardiac muscle of left ventricle and 213 other cell types or tissues"/>
</dbReference>
<dbReference type="GO" id="GO:0036064">
    <property type="term" value="C:ciliary basal body"/>
    <property type="evidence" value="ECO:0007669"/>
    <property type="project" value="Ensembl"/>
</dbReference>
<dbReference type="GO" id="GO:0005737">
    <property type="term" value="C:cytoplasm"/>
    <property type="evidence" value="ECO:0000250"/>
    <property type="project" value="UniProtKB"/>
</dbReference>
<dbReference type="GO" id="GO:0005829">
    <property type="term" value="C:cytosol"/>
    <property type="evidence" value="ECO:0000266"/>
    <property type="project" value="MGI"/>
</dbReference>
<dbReference type="GO" id="GO:0005739">
    <property type="term" value="C:mitochondrion"/>
    <property type="evidence" value="ECO:0007669"/>
    <property type="project" value="Ensembl"/>
</dbReference>
<dbReference type="GO" id="GO:0005654">
    <property type="term" value="C:nucleoplasm"/>
    <property type="evidence" value="ECO:0007669"/>
    <property type="project" value="Ensembl"/>
</dbReference>
<dbReference type="GO" id="GO:0005634">
    <property type="term" value="C:nucleus"/>
    <property type="evidence" value="ECO:0000250"/>
    <property type="project" value="UniProtKB"/>
</dbReference>
<dbReference type="GO" id="GO:0101031">
    <property type="term" value="C:protein folding chaperone complex"/>
    <property type="evidence" value="ECO:0007669"/>
    <property type="project" value="Ensembl"/>
</dbReference>
<dbReference type="GO" id="GO:0001725">
    <property type="term" value="C:stress fiber"/>
    <property type="evidence" value="ECO:0007669"/>
    <property type="project" value="Ensembl"/>
</dbReference>
<dbReference type="GO" id="GO:0030018">
    <property type="term" value="C:Z disc"/>
    <property type="evidence" value="ECO:0000314"/>
    <property type="project" value="MGI"/>
</dbReference>
<dbReference type="GO" id="GO:0000774">
    <property type="term" value="F:adenyl-nucleotide exchange factor activity"/>
    <property type="evidence" value="ECO:0000250"/>
    <property type="project" value="UniProtKB"/>
</dbReference>
<dbReference type="GO" id="GO:0044877">
    <property type="term" value="F:protein-containing complex binding"/>
    <property type="evidence" value="ECO:0000314"/>
    <property type="project" value="MGI"/>
</dbReference>
<dbReference type="GO" id="GO:0051087">
    <property type="term" value="F:protein-folding chaperone binding"/>
    <property type="evidence" value="ECO:0007669"/>
    <property type="project" value="Ensembl"/>
</dbReference>
<dbReference type="GO" id="GO:0000045">
    <property type="term" value="P:autophagosome assembly"/>
    <property type="evidence" value="ECO:0007669"/>
    <property type="project" value="Ensembl"/>
</dbReference>
<dbReference type="GO" id="GO:0034605">
    <property type="term" value="P:cellular response to heat"/>
    <property type="evidence" value="ECO:0000250"/>
    <property type="project" value="UniProtKB"/>
</dbReference>
<dbReference type="GO" id="GO:0071260">
    <property type="term" value="P:cellular response to mechanical stimulus"/>
    <property type="evidence" value="ECO:0000315"/>
    <property type="project" value="MGI"/>
</dbReference>
<dbReference type="GO" id="GO:0034620">
    <property type="term" value="P:cellular response to unfolded protein"/>
    <property type="evidence" value="ECO:0007669"/>
    <property type="project" value="Ensembl"/>
</dbReference>
<dbReference type="GO" id="GO:0061684">
    <property type="term" value="P:chaperone-mediated autophagy"/>
    <property type="evidence" value="ECO:0007669"/>
    <property type="project" value="Ensembl"/>
</dbReference>
<dbReference type="GO" id="GO:0097192">
    <property type="term" value="P:extrinsic apoptotic signaling pathway in absence of ligand"/>
    <property type="evidence" value="ECO:0000314"/>
    <property type="project" value="MGI"/>
</dbReference>
<dbReference type="GO" id="GO:0008625">
    <property type="term" value="P:extrinsic apoptotic signaling pathway via death domain receptors"/>
    <property type="evidence" value="ECO:0000266"/>
    <property type="project" value="MGI"/>
</dbReference>
<dbReference type="GO" id="GO:0046716">
    <property type="term" value="P:muscle cell cellular homeostasis"/>
    <property type="evidence" value="ECO:0000315"/>
    <property type="project" value="BHF-UCL"/>
</dbReference>
<dbReference type="GO" id="GO:1903215">
    <property type="term" value="P:negative regulation of protein targeting to mitochondrion"/>
    <property type="evidence" value="ECO:0007669"/>
    <property type="project" value="Ensembl"/>
</dbReference>
<dbReference type="GO" id="GO:0010664">
    <property type="term" value="P:negative regulation of striated muscle cell apoptotic process"/>
    <property type="evidence" value="ECO:0000315"/>
    <property type="project" value="MGI"/>
</dbReference>
<dbReference type="GO" id="GO:1905337">
    <property type="term" value="P:positive regulation of aggrephagy"/>
    <property type="evidence" value="ECO:0007669"/>
    <property type="project" value="Ensembl"/>
</dbReference>
<dbReference type="GO" id="GO:0046827">
    <property type="term" value="P:positive regulation of protein export from nucleus"/>
    <property type="evidence" value="ECO:0000250"/>
    <property type="project" value="UniProtKB"/>
</dbReference>
<dbReference type="GO" id="GO:0042307">
    <property type="term" value="P:positive regulation of protein import into nucleus"/>
    <property type="evidence" value="ECO:0000250"/>
    <property type="project" value="UniProtKB"/>
</dbReference>
<dbReference type="GO" id="GO:0050821">
    <property type="term" value="P:protein stabilization"/>
    <property type="evidence" value="ECO:0000315"/>
    <property type="project" value="MGI"/>
</dbReference>
<dbReference type="GO" id="GO:0021510">
    <property type="term" value="P:spinal cord development"/>
    <property type="evidence" value="ECO:0007669"/>
    <property type="project" value="Ensembl"/>
</dbReference>
<dbReference type="GO" id="GO:0010658">
    <property type="term" value="P:striated muscle cell apoptotic process"/>
    <property type="evidence" value="ECO:0000315"/>
    <property type="project" value="MGI"/>
</dbReference>
<dbReference type="CDD" id="cd00201">
    <property type="entry name" value="WW"/>
    <property type="match status" value="1"/>
</dbReference>
<dbReference type="FunFam" id="1.20.58.120:FF:000006">
    <property type="entry name" value="BAG family molecular chaperone regulator 3"/>
    <property type="match status" value="1"/>
</dbReference>
<dbReference type="FunFam" id="2.20.70.10:FF:000007">
    <property type="entry name" value="E3 ubiquitin-protein ligase HECW2 isoform X1"/>
    <property type="match status" value="1"/>
</dbReference>
<dbReference type="Gene3D" id="2.20.70.10">
    <property type="match status" value="1"/>
</dbReference>
<dbReference type="Gene3D" id="1.20.58.120">
    <property type="entry name" value="BAG domain"/>
    <property type="match status" value="1"/>
</dbReference>
<dbReference type="InterPro" id="IPR039773">
    <property type="entry name" value="BAG_chaperone_regulator"/>
</dbReference>
<dbReference type="InterPro" id="IPR036533">
    <property type="entry name" value="BAG_dom_sf"/>
</dbReference>
<dbReference type="InterPro" id="IPR003103">
    <property type="entry name" value="BAG_domain"/>
</dbReference>
<dbReference type="InterPro" id="IPR001202">
    <property type="entry name" value="WW_dom"/>
</dbReference>
<dbReference type="InterPro" id="IPR036020">
    <property type="entry name" value="WW_dom_sf"/>
</dbReference>
<dbReference type="PANTHER" id="PTHR12329:SF12">
    <property type="entry name" value="BAG FAMILY MOLECULAR CHAPERONE REGULATOR 3"/>
    <property type="match status" value="1"/>
</dbReference>
<dbReference type="PANTHER" id="PTHR12329">
    <property type="entry name" value="BCL2-ASSOCIATED ATHANOGENE"/>
    <property type="match status" value="1"/>
</dbReference>
<dbReference type="Pfam" id="PF02179">
    <property type="entry name" value="BAG"/>
    <property type="match status" value="1"/>
</dbReference>
<dbReference type="Pfam" id="PF00397">
    <property type="entry name" value="WW"/>
    <property type="match status" value="1"/>
</dbReference>
<dbReference type="SMART" id="SM00264">
    <property type="entry name" value="BAG"/>
    <property type="match status" value="1"/>
</dbReference>
<dbReference type="SMART" id="SM00456">
    <property type="entry name" value="WW"/>
    <property type="match status" value="1"/>
</dbReference>
<dbReference type="SUPFAM" id="SSF63491">
    <property type="entry name" value="BAG domain"/>
    <property type="match status" value="1"/>
</dbReference>
<dbReference type="SUPFAM" id="SSF51045">
    <property type="entry name" value="WW domain"/>
    <property type="match status" value="1"/>
</dbReference>
<dbReference type="PROSITE" id="PS51035">
    <property type="entry name" value="BAG"/>
    <property type="match status" value="1"/>
</dbReference>
<dbReference type="PROSITE" id="PS01159">
    <property type="entry name" value="WW_DOMAIN_1"/>
    <property type="match status" value="1"/>
</dbReference>
<dbReference type="PROSITE" id="PS50020">
    <property type="entry name" value="WW_DOMAIN_2"/>
    <property type="match status" value="1"/>
</dbReference>
<proteinExistence type="evidence at protein level"/>
<feature type="initiator methionine" description="Removed" evidence="1">
    <location>
        <position position="1"/>
    </location>
</feature>
<feature type="chain" id="PRO_0000088869" description="BAG family molecular chaperone regulator 3">
    <location>
        <begin position="2"/>
        <end position="577"/>
    </location>
</feature>
<feature type="domain" description="WW 1" evidence="2">
    <location>
        <begin position="22"/>
        <end position="56"/>
    </location>
</feature>
<feature type="domain" description="WW 2" evidence="2">
    <location>
        <begin position="126"/>
        <end position="157"/>
    </location>
</feature>
<feature type="domain" description="BAG" evidence="3">
    <location>
        <begin position="426"/>
        <end position="503"/>
    </location>
</feature>
<feature type="region of interest" description="Disordered" evidence="4">
    <location>
        <begin position="1"/>
        <end position="81"/>
    </location>
</feature>
<feature type="region of interest" description="Disordered" evidence="4">
    <location>
        <begin position="126"/>
        <end position="207"/>
    </location>
</feature>
<feature type="region of interest" description="Disordered" evidence="4">
    <location>
        <begin position="229"/>
        <end position="427"/>
    </location>
</feature>
<feature type="region of interest" description="Disordered" evidence="4">
    <location>
        <begin position="524"/>
        <end position="577"/>
    </location>
</feature>
<feature type="compositionally biased region" description="Polar residues" evidence="4">
    <location>
        <begin position="1"/>
        <end position="17"/>
    </location>
</feature>
<feature type="compositionally biased region" description="Low complexity" evidence="4">
    <location>
        <begin position="158"/>
        <end position="204"/>
    </location>
</feature>
<feature type="compositionally biased region" description="Basic and acidic residues" evidence="4">
    <location>
        <begin position="256"/>
        <end position="265"/>
    </location>
</feature>
<feature type="compositionally biased region" description="Pro residues" evidence="4">
    <location>
        <begin position="332"/>
        <end position="341"/>
    </location>
</feature>
<feature type="compositionally biased region" description="Pro residues" evidence="4">
    <location>
        <begin position="376"/>
        <end position="392"/>
    </location>
</feature>
<feature type="compositionally biased region" description="Basic and acidic residues" evidence="4">
    <location>
        <begin position="535"/>
        <end position="548"/>
    </location>
</feature>
<feature type="modified residue" description="N-acetylserine" evidence="1">
    <location>
        <position position="2"/>
    </location>
</feature>
<feature type="modified residue" description="Phosphoserine" evidence="8">
    <location>
        <position position="138"/>
    </location>
</feature>
<feature type="modified residue" description="Omega-N-methylarginine" evidence="9">
    <location>
        <position position="141"/>
    </location>
</feature>
<feature type="modified residue" description="Phosphoserine" evidence="1">
    <location>
        <position position="179"/>
    </location>
</feature>
<feature type="modified residue" description="Phosphoserine" evidence="1">
    <location>
        <position position="204"/>
    </location>
</feature>
<feature type="modified residue" description="Omega-N-methylarginine" evidence="9">
    <location>
        <position position="267"/>
    </location>
</feature>
<feature type="modified residue" description="Phosphoserine" evidence="1">
    <location>
        <position position="280"/>
    </location>
</feature>
<feature type="modified residue" description="Phosphoserine" evidence="1">
    <location>
        <position position="281"/>
    </location>
</feature>
<feature type="modified residue" description="Phosphoserine" evidence="1">
    <location>
        <position position="285"/>
    </location>
</feature>
<feature type="modified residue" description="Phosphothreonine" evidence="8">
    <location>
        <position position="291"/>
    </location>
</feature>
<feature type="modified residue" description="Phosphoserine" evidence="7 8">
    <location>
        <position position="297"/>
    </location>
</feature>
<feature type="modified residue" description="Phosphoserine" evidence="8">
    <location>
        <position position="380"/>
    </location>
</feature>
<feature type="modified residue" description="Phosphoserine" evidence="8">
    <location>
        <position position="382"/>
    </location>
</feature>
<feature type="modified residue" description="Phosphoserine" evidence="7 8">
    <location>
        <position position="390"/>
    </location>
</feature>
<feature type="cross-link" description="Glycyl lysine isopeptide (Lys-Gly) (interchain with G-Cter in SUMO1); alternate" evidence="1">
    <location>
        <position position="450"/>
    </location>
</feature>
<feature type="cross-link" description="Glycyl lysine isopeptide (Lys-Gly) (interchain with G-Cter in SUMO2); alternate" evidence="1">
    <location>
        <position position="450"/>
    </location>
</feature>
<feature type="sequence conflict" description="In Ref. 1; AAF26840." evidence="6" ref="1">
    <original>D</original>
    <variation>N</variation>
    <location>
        <position position="74"/>
    </location>
</feature>
<feature type="sequence conflict" description="In Ref. 1; AAF26840." evidence="6" ref="1">
    <original>Q</original>
    <variation>P</variation>
    <location>
        <position position="527"/>
    </location>
</feature>
<feature type="sequence conflict" description="In Ref. 2; BAA95066." evidence="6" ref="2">
    <original>K</original>
    <variation>E</variation>
    <location>
        <position position="539"/>
    </location>
</feature>
<feature type="strand" evidence="10">
    <location>
        <begin position="417"/>
        <end position="420"/>
    </location>
</feature>
<feature type="helix" evidence="10">
    <location>
        <begin position="425"/>
        <end position="445"/>
    </location>
</feature>
<feature type="strand" evidence="10">
    <location>
        <begin position="451"/>
        <end position="453"/>
    </location>
</feature>
<feature type="helix" evidence="10">
    <location>
        <begin position="454"/>
        <end position="471"/>
    </location>
</feature>
<feature type="helix" evidence="10">
    <location>
        <begin position="479"/>
        <end position="503"/>
    </location>
</feature>
<comment type="function">
    <text evidence="1">Co-chaperone and adapter protein that connects different classes of molecular chaperones including heat shock proteins 70 (HSP70s), e.g. HSPA1A/HSP70 or HSPA8/HSC70, and small heat shock proteins (sHSPs), e.g. HSPB8. Acts as a nucleotide-exchange factor (NEF) promoting the release of ADP from HSP70s, thereby triggering client protein release. Nucleotide release is mediated via BAG3 binding to the nucleotide-binding domain (NBD) of HSP70s, whereas client release is mediated via its binding to the substrate-binding domain (SBD). Has anti-apoptotic activity. Plays a role in the HSF1 nucleocytoplasmic transport.</text>
</comment>
<comment type="subunit">
    <text evidence="1 5">Forms a ternary complex with HSPA1A/HSP70 and HSPB8, serving as scaffold subunit (By similarity). Component of the chaperone-assisted selective autophagy (CASA) complex consisting of BAG3, HSPA8/HSC70, HSPB8 and STUB1/CHIP (PubMed:20060297). Binds to the ATPase domain of HSP70 chaperones (By similarity). Interacts with BCL2 (By similarity). Interacts with phospholipase C-gamma proteins (By similarity). Interacts with DNAJB1 and DNAJB6 (By similarity). Interacts (via BAG domain) with HSF1; this interaction occurs in normal and heat-shocked cells (By similarity). Interacts with HSPA8/HSC70 (via NBD), HSPA1A (via NBD) and HSPA1B (via NBD) (By similarity). Interacts (via WW domain 1) with SYNPO2 (via PPPY motif) (By similarity). Interacts with HSPB8 (By similarity).</text>
</comment>
<comment type="interaction">
    <interactant intactId="EBI-309231">
        <id>Q9JLV1</id>
    </interactant>
    <interactant intactId="EBI-1185167">
        <id>Q8AZK7</id>
        <label>EBNA-LP</label>
    </interactant>
    <organismsDiffer>true</organismsDiffer>
    <experiments>2</experiments>
</comment>
<comment type="subcellular location">
    <subcellularLocation>
        <location evidence="1">Nucleus</location>
    </subcellularLocation>
    <subcellularLocation>
        <location evidence="1">Cytoplasm</location>
    </subcellularLocation>
    <text evidence="1">Colocalizes with HSF1 to the nucleus upon heat stress.</text>
</comment>
<comment type="domain">
    <text evidence="1">The BAG domain interacts with the nucleotide-binding domain (NBD) of HSP70s and is essential for the nucleotide-exchange factor activity.</text>
</comment>